<keyword id="KW-0067">ATP-binding</keyword>
<keyword id="KW-0131">Cell cycle</keyword>
<keyword id="KW-0132">Cell division</keyword>
<keyword id="KW-0159">Chromosome partition</keyword>
<keyword id="KW-0175">Coiled coil</keyword>
<keyword id="KW-0963">Cytoplasm</keyword>
<keyword id="KW-0226">DNA condensation</keyword>
<keyword id="KW-0238">DNA-binding</keyword>
<keyword id="KW-0547">Nucleotide-binding</keyword>
<evidence type="ECO:0000255" key="1">
    <source>
        <dbReference type="HAMAP-Rule" id="MF_01800"/>
    </source>
</evidence>
<feature type="chain" id="PRO_1000187471" description="Chromosome partition protein MukB">
    <location>
        <begin position="1"/>
        <end position="1486"/>
    </location>
</feature>
<feature type="region of interest" description="Flexible hinge" evidence="1">
    <location>
        <begin position="666"/>
        <end position="783"/>
    </location>
</feature>
<feature type="coiled-coil region" evidence="1">
    <location>
        <begin position="326"/>
        <end position="418"/>
    </location>
</feature>
<feature type="coiled-coil region" evidence="1">
    <location>
        <begin position="444"/>
        <end position="480"/>
    </location>
</feature>
<feature type="coiled-coil region" evidence="1">
    <location>
        <begin position="509"/>
        <end position="603"/>
    </location>
</feature>
<feature type="coiled-coil region" evidence="1">
    <location>
        <begin position="835"/>
        <end position="923"/>
    </location>
</feature>
<feature type="coiled-coil region" evidence="1">
    <location>
        <begin position="977"/>
        <end position="1115"/>
    </location>
</feature>
<feature type="coiled-coil region" evidence="1">
    <location>
        <begin position="1209"/>
        <end position="1266"/>
    </location>
</feature>
<feature type="binding site" evidence="1">
    <location>
        <begin position="34"/>
        <end position="41"/>
    </location>
    <ligand>
        <name>ATP</name>
        <dbReference type="ChEBI" id="CHEBI:30616"/>
    </ligand>
</feature>
<organism>
    <name type="scientific">Escherichia coli O81 (strain ED1a)</name>
    <dbReference type="NCBI Taxonomy" id="585397"/>
    <lineage>
        <taxon>Bacteria</taxon>
        <taxon>Pseudomonadati</taxon>
        <taxon>Pseudomonadota</taxon>
        <taxon>Gammaproteobacteria</taxon>
        <taxon>Enterobacterales</taxon>
        <taxon>Enterobacteriaceae</taxon>
        <taxon>Escherichia</taxon>
    </lineage>
</organism>
<proteinExistence type="inferred from homology"/>
<comment type="function">
    <text evidence="1">Plays a central role in chromosome condensation, segregation and cell cycle progression. Functions as a homodimer, which is essential for chromosome partition. Involved in negative DNA supercoiling in vivo, and by this means organize and compact chromosomes. May achieve or facilitate chromosome segregation by condensation DNA from both sides of a centrally located replisome during cell division.</text>
</comment>
<comment type="subunit">
    <text evidence="1">Homodimerization via its hinge domain. Binds to DNA via its C-terminal region. Interacts, and probably forms a ternary complex, with MukE and MukF via its C-terminal region. The complex formation is stimulated by calcium or magnesium. Interacts with tubulin-related protein FtsZ.</text>
</comment>
<comment type="subcellular location">
    <subcellularLocation>
        <location evidence="1">Cytoplasm</location>
        <location evidence="1">Nucleoid</location>
    </subcellularLocation>
    <text evidence="1">Restricted to the nucleoid region.</text>
</comment>
<comment type="domain">
    <text evidence="1">The hinge domain, which separates the large intramolecular coiled coil regions, allows the homodimerization, forming a V-shaped homodimer.</text>
</comment>
<comment type="similarity">
    <text evidence="1">Belongs to the SMC family. MukB subfamily.</text>
</comment>
<name>MUKB_ECO81</name>
<reference key="1">
    <citation type="journal article" date="2009" name="PLoS Genet.">
        <title>Organised genome dynamics in the Escherichia coli species results in highly diverse adaptive paths.</title>
        <authorList>
            <person name="Touchon M."/>
            <person name="Hoede C."/>
            <person name="Tenaillon O."/>
            <person name="Barbe V."/>
            <person name="Baeriswyl S."/>
            <person name="Bidet P."/>
            <person name="Bingen E."/>
            <person name="Bonacorsi S."/>
            <person name="Bouchier C."/>
            <person name="Bouvet O."/>
            <person name="Calteau A."/>
            <person name="Chiapello H."/>
            <person name="Clermont O."/>
            <person name="Cruveiller S."/>
            <person name="Danchin A."/>
            <person name="Diard M."/>
            <person name="Dossat C."/>
            <person name="Karoui M.E."/>
            <person name="Frapy E."/>
            <person name="Garry L."/>
            <person name="Ghigo J.M."/>
            <person name="Gilles A.M."/>
            <person name="Johnson J."/>
            <person name="Le Bouguenec C."/>
            <person name="Lescat M."/>
            <person name="Mangenot S."/>
            <person name="Martinez-Jehanne V."/>
            <person name="Matic I."/>
            <person name="Nassif X."/>
            <person name="Oztas S."/>
            <person name="Petit M.A."/>
            <person name="Pichon C."/>
            <person name="Rouy Z."/>
            <person name="Ruf C.S."/>
            <person name="Schneider D."/>
            <person name="Tourret J."/>
            <person name="Vacherie B."/>
            <person name="Vallenet D."/>
            <person name="Medigue C."/>
            <person name="Rocha E.P.C."/>
            <person name="Denamur E."/>
        </authorList>
    </citation>
    <scope>NUCLEOTIDE SEQUENCE [LARGE SCALE GENOMIC DNA]</scope>
    <source>
        <strain>ED1a</strain>
    </source>
</reference>
<dbReference type="EMBL" id="CU928162">
    <property type="protein sequence ID" value="CAR07156.1"/>
    <property type="molecule type" value="Genomic_DNA"/>
</dbReference>
<dbReference type="RefSeq" id="WP_000572649.1">
    <property type="nucleotide sequence ID" value="NC_011745.1"/>
</dbReference>
<dbReference type="SMR" id="B7MS42"/>
<dbReference type="KEGG" id="ecq:ECED1_0954"/>
<dbReference type="HOGENOM" id="CLU_004430_0_0_6"/>
<dbReference type="Proteomes" id="UP000000748">
    <property type="component" value="Chromosome"/>
</dbReference>
<dbReference type="GO" id="GO:0005737">
    <property type="term" value="C:cytoplasm"/>
    <property type="evidence" value="ECO:0007669"/>
    <property type="project" value="UniProtKB-UniRule"/>
</dbReference>
<dbReference type="GO" id="GO:0009295">
    <property type="term" value="C:nucleoid"/>
    <property type="evidence" value="ECO:0007669"/>
    <property type="project" value="UniProtKB-SubCell"/>
</dbReference>
<dbReference type="GO" id="GO:0005524">
    <property type="term" value="F:ATP binding"/>
    <property type="evidence" value="ECO:0007669"/>
    <property type="project" value="UniProtKB-UniRule"/>
</dbReference>
<dbReference type="GO" id="GO:0003677">
    <property type="term" value="F:DNA binding"/>
    <property type="evidence" value="ECO:0007669"/>
    <property type="project" value="UniProtKB-UniRule"/>
</dbReference>
<dbReference type="GO" id="GO:0051301">
    <property type="term" value="P:cell division"/>
    <property type="evidence" value="ECO:0007669"/>
    <property type="project" value="UniProtKB-KW"/>
</dbReference>
<dbReference type="GO" id="GO:0030261">
    <property type="term" value="P:chromosome condensation"/>
    <property type="evidence" value="ECO:0007669"/>
    <property type="project" value="UniProtKB-KW"/>
</dbReference>
<dbReference type="GO" id="GO:0007059">
    <property type="term" value="P:chromosome segregation"/>
    <property type="evidence" value="ECO:0007669"/>
    <property type="project" value="UniProtKB-UniRule"/>
</dbReference>
<dbReference type="GO" id="GO:0006260">
    <property type="term" value="P:DNA replication"/>
    <property type="evidence" value="ECO:0007669"/>
    <property type="project" value="UniProtKB-UniRule"/>
</dbReference>
<dbReference type="FunFam" id="3.30.70.3500:FF:000001">
    <property type="entry name" value="Chromosome partition protein MukB"/>
    <property type="match status" value="1"/>
</dbReference>
<dbReference type="FunFam" id="3.40.1140.10:FF:000001">
    <property type="entry name" value="Chromosome partition protein MukB"/>
    <property type="match status" value="1"/>
</dbReference>
<dbReference type="FunFam" id="3.40.1140.10:FF:000002">
    <property type="entry name" value="Chromosome partition protein MukB"/>
    <property type="match status" value="1"/>
</dbReference>
<dbReference type="Gene3D" id="1.20.58.850">
    <property type="match status" value="1"/>
</dbReference>
<dbReference type="Gene3D" id="3.40.1140.10">
    <property type="match status" value="2"/>
</dbReference>
<dbReference type="Gene3D" id="1.20.5.420">
    <property type="entry name" value="Immunoglobulin FC, subunit C"/>
    <property type="match status" value="1"/>
</dbReference>
<dbReference type="Gene3D" id="3.30.70.3500">
    <property type="entry name" value="MukB, hinge domain"/>
    <property type="match status" value="1"/>
</dbReference>
<dbReference type="HAMAP" id="MF_01800">
    <property type="entry name" value="MukB"/>
    <property type="match status" value="1"/>
</dbReference>
<dbReference type="InterPro" id="IPR012090">
    <property type="entry name" value="MukB"/>
</dbReference>
<dbReference type="InterPro" id="IPR050308">
    <property type="entry name" value="MukB/SMC"/>
</dbReference>
<dbReference type="InterPro" id="IPR032520">
    <property type="entry name" value="MukB_hinge"/>
</dbReference>
<dbReference type="InterPro" id="IPR042501">
    <property type="entry name" value="MukB_hinge_sf"/>
</dbReference>
<dbReference type="InterPro" id="IPR007406">
    <property type="entry name" value="MukB_N_dom"/>
</dbReference>
<dbReference type="InterPro" id="IPR027417">
    <property type="entry name" value="P-loop_NTPase"/>
</dbReference>
<dbReference type="NCBIfam" id="NF003422">
    <property type="entry name" value="PRK04863.1"/>
    <property type="match status" value="1"/>
</dbReference>
<dbReference type="PANTHER" id="PTHR42963">
    <property type="entry name" value="CHROMOSOME PARTITION PROTEIN MUKB"/>
    <property type="match status" value="1"/>
</dbReference>
<dbReference type="PANTHER" id="PTHR42963:SF1">
    <property type="entry name" value="DUF4476 DOMAIN-CONTAINING PROTEIN"/>
    <property type="match status" value="1"/>
</dbReference>
<dbReference type="Pfam" id="PF04310">
    <property type="entry name" value="MukB"/>
    <property type="match status" value="1"/>
</dbReference>
<dbReference type="Pfam" id="PF16330">
    <property type="entry name" value="MukB_hinge"/>
    <property type="match status" value="1"/>
</dbReference>
<dbReference type="Pfam" id="PF13558">
    <property type="entry name" value="SbcC_Walker_B"/>
    <property type="match status" value="1"/>
</dbReference>
<dbReference type="PIRSF" id="PIRSF005246">
    <property type="entry name" value="MukB"/>
    <property type="match status" value="1"/>
</dbReference>
<dbReference type="SUPFAM" id="SSF52540">
    <property type="entry name" value="P-loop containing nucleoside triphosphate hydrolases"/>
    <property type="match status" value="2"/>
</dbReference>
<gene>
    <name evidence="1" type="primary">mukB</name>
    <name type="ordered locus">ECED1_0954</name>
</gene>
<accession>B7MS42</accession>
<protein>
    <recommendedName>
        <fullName evidence="1">Chromosome partition protein MukB</fullName>
    </recommendedName>
    <alternativeName>
        <fullName evidence="1">Structural maintenance of chromosome-related protein</fullName>
    </alternativeName>
</protein>
<sequence length="1486" mass="170242">MIERGKFRSLTLINWNGFFARTFDLDELVTTLSGGNGAGKSTTMAAFVTALIPDLTLLHFRNTTEAGATSGSRDKGLHGKLKAGVCYSMLDTINSRHQRVVVGVRLQQVAGRDRKVDIKPFAIQGLPMSVQPTQLVTETLNERQARVLPLNELKDKLEAMEGVQFKQFNSITDYHSLMFDLGIIARRLRSASDRSKFYRLIEASLYGGISSAITRSLRDYLLPENSGVRKAFQDMEAALRENRMTLEAIRVTQSDRDLFKHLISEATNYVAADYMRHANERRVHLDKALEFRRELHTSRQQLAAEQYKHVDMARELAEHNGAEGDLEADYQAASDHLNLVQTALRQQEKIERYEADLDELQIRLEEQNEVVAEAIERQEENEARAEAAELEVDELKSQLADYQQALDVQQTRAIQYNQAIAALNRAKELCHLPDLTADSAAEWLETFQAKELEATEKMLSLEQKMSMAQTAHSQFEQAYQLVVAINGPLARNEAWDVARELLREGVDQRHLAEQVQPLRMRLSELEQRLREQQEAERLLADFCKRQGKNFDIDELEALHQELEARIASLSDSVSNAREERMALRQEQEQLQSRIQSLMQRAPVWLAAQNSLNQLSEQCGEEFSSSQDVTEYLQQLLEREREAIVERDEVGARKNAVDEEIERLSQPGGSEDQRLNALAERFGGVLLSEIYDDVSLEDAPYFSALYGPSRHAIVVPDLSQVTEHLEGLTDCPEDLYLIEGDPQSFDDSVFSVDELEKAVVVKIADRQWRYSRFPEVPLFGRAARESRIESLHAEREVLSERFATLSFDVQKTQRLHQAFSRFIGSHLAVAFESDPEAEIRQLNSRRVELERALSNHENDNQQQRIQFEQAKEGVTALNRILPRLNLLADDSLADRVDEIRERLDEAQEAARFVQQFGNQLAKLEPIVSVLQSDPEQFEQLKEDYAYSQQMQRDARQQAFALTEVVQRRAHFSYSDSAEMLSGNSDLNEKLRERLEQAEAERTRAREALRGHAVQLNQYNQVLASLKSSYDTKKELLNDLQRELQDIGVRADSGAEERARIRRDELHAQLSNNRSRRNQLEKALTFCEAEMDNLTRKLRKLERDYFEMREQVVTAKAGWCAVMRMVKDNGVERRLHRRELAYLSADDLRSMSDKALGALRLAVADNEHLRDVLRMSEDPKRPERKIQFFVAVYQHLRERIRQDIIRTDDPVEAIEQMEIELSRLTEELTSREQKLAISSRSVANIIRKTIQREQNRIRMLNQGLQNVSFGQVNSVRLNVNVRETHAMLLDVLSEQHEQHQDLFNSNRLTFSEALAKLYQRLNPQIDMGQRTPQTIGEELLDYRNYLEMEVEVNRGSDGWLRAESGALSTGEAIGTGMSILVMVVQSWEDESRRLRGKDISPCRLLFLDEAARLDARSIATLFELCERLQMQLIIAAPENISPEKGTTYKLVRKVFQNTEHVHVVGLRGFAPQLPETLPGSDEAPSQAS</sequence>